<comment type="function">
    <text evidence="1">Catalyzes the formation of 4-diphosphocytidyl-2-C-methyl-D-erythritol from CTP and 2-C-methyl-D-erythritol 4-phosphate (MEP).</text>
</comment>
<comment type="catalytic activity">
    <reaction evidence="1">
        <text>2-C-methyl-D-erythritol 4-phosphate + CTP + H(+) = 4-CDP-2-C-methyl-D-erythritol + diphosphate</text>
        <dbReference type="Rhea" id="RHEA:13429"/>
        <dbReference type="ChEBI" id="CHEBI:15378"/>
        <dbReference type="ChEBI" id="CHEBI:33019"/>
        <dbReference type="ChEBI" id="CHEBI:37563"/>
        <dbReference type="ChEBI" id="CHEBI:57823"/>
        <dbReference type="ChEBI" id="CHEBI:58262"/>
        <dbReference type="EC" id="2.7.7.60"/>
    </reaction>
</comment>
<comment type="pathway">
    <text evidence="1">Isoprenoid biosynthesis; isopentenyl diphosphate biosynthesis via DXP pathway; isopentenyl diphosphate from 1-deoxy-D-xylulose 5-phosphate: step 2/6.</text>
</comment>
<comment type="similarity">
    <text evidence="1">Belongs to the IspD/TarI cytidylyltransferase family. IspD subfamily.</text>
</comment>
<accession>Q1I648</accession>
<reference key="1">
    <citation type="journal article" date="2006" name="Nat. Biotechnol.">
        <title>Complete genome sequence of the entomopathogenic and metabolically versatile soil bacterium Pseudomonas entomophila.</title>
        <authorList>
            <person name="Vodovar N."/>
            <person name="Vallenet D."/>
            <person name="Cruveiller S."/>
            <person name="Rouy Z."/>
            <person name="Barbe V."/>
            <person name="Acosta C."/>
            <person name="Cattolico L."/>
            <person name="Jubin C."/>
            <person name="Lajus A."/>
            <person name="Segurens B."/>
            <person name="Vacherie B."/>
            <person name="Wincker P."/>
            <person name="Weissenbach J."/>
            <person name="Lemaitre B."/>
            <person name="Medigue C."/>
            <person name="Boccard F."/>
        </authorList>
    </citation>
    <scope>NUCLEOTIDE SEQUENCE [LARGE SCALE GENOMIC DNA]</scope>
    <source>
        <strain>L48</strain>
    </source>
</reference>
<proteinExistence type="inferred from homology"/>
<dbReference type="EC" id="2.7.7.60" evidence="1"/>
<dbReference type="EMBL" id="CT573326">
    <property type="protein sequence ID" value="CAK16887.1"/>
    <property type="molecule type" value="Genomic_DNA"/>
</dbReference>
<dbReference type="RefSeq" id="WP_011535258.1">
    <property type="nucleotide sequence ID" value="NC_008027.1"/>
</dbReference>
<dbReference type="SMR" id="Q1I648"/>
<dbReference type="STRING" id="384676.PSEEN4198"/>
<dbReference type="GeneID" id="32807205"/>
<dbReference type="KEGG" id="pen:PSEEN4198"/>
<dbReference type="eggNOG" id="COG1211">
    <property type="taxonomic scope" value="Bacteria"/>
</dbReference>
<dbReference type="HOGENOM" id="CLU_061281_3_1_6"/>
<dbReference type="OrthoDB" id="9806837at2"/>
<dbReference type="UniPathway" id="UPA00056">
    <property type="reaction ID" value="UER00093"/>
</dbReference>
<dbReference type="Proteomes" id="UP000000658">
    <property type="component" value="Chromosome"/>
</dbReference>
<dbReference type="GO" id="GO:0050518">
    <property type="term" value="F:2-C-methyl-D-erythritol 4-phosphate cytidylyltransferase activity"/>
    <property type="evidence" value="ECO:0007669"/>
    <property type="project" value="UniProtKB-UniRule"/>
</dbReference>
<dbReference type="GO" id="GO:0019288">
    <property type="term" value="P:isopentenyl diphosphate biosynthetic process, methylerythritol 4-phosphate pathway"/>
    <property type="evidence" value="ECO:0007669"/>
    <property type="project" value="UniProtKB-UniRule"/>
</dbReference>
<dbReference type="CDD" id="cd02516">
    <property type="entry name" value="CDP-ME_synthetase"/>
    <property type="match status" value="1"/>
</dbReference>
<dbReference type="FunFam" id="3.90.550.10:FF:000003">
    <property type="entry name" value="2-C-methyl-D-erythritol 4-phosphate cytidylyltransferase"/>
    <property type="match status" value="1"/>
</dbReference>
<dbReference type="Gene3D" id="3.90.550.10">
    <property type="entry name" value="Spore Coat Polysaccharide Biosynthesis Protein SpsA, Chain A"/>
    <property type="match status" value="1"/>
</dbReference>
<dbReference type="HAMAP" id="MF_00108">
    <property type="entry name" value="IspD"/>
    <property type="match status" value="1"/>
</dbReference>
<dbReference type="InterPro" id="IPR001228">
    <property type="entry name" value="IspD"/>
</dbReference>
<dbReference type="InterPro" id="IPR034683">
    <property type="entry name" value="IspD/TarI"/>
</dbReference>
<dbReference type="InterPro" id="IPR050088">
    <property type="entry name" value="IspD/TarI_cytidylyltransf_bact"/>
</dbReference>
<dbReference type="InterPro" id="IPR018294">
    <property type="entry name" value="ISPD_synthase_CS"/>
</dbReference>
<dbReference type="InterPro" id="IPR029044">
    <property type="entry name" value="Nucleotide-diphossugar_trans"/>
</dbReference>
<dbReference type="NCBIfam" id="TIGR00453">
    <property type="entry name" value="ispD"/>
    <property type="match status" value="1"/>
</dbReference>
<dbReference type="PANTHER" id="PTHR32125">
    <property type="entry name" value="2-C-METHYL-D-ERYTHRITOL 4-PHOSPHATE CYTIDYLYLTRANSFERASE, CHLOROPLASTIC"/>
    <property type="match status" value="1"/>
</dbReference>
<dbReference type="PANTHER" id="PTHR32125:SF4">
    <property type="entry name" value="2-C-METHYL-D-ERYTHRITOL 4-PHOSPHATE CYTIDYLYLTRANSFERASE, CHLOROPLASTIC"/>
    <property type="match status" value="1"/>
</dbReference>
<dbReference type="Pfam" id="PF01128">
    <property type="entry name" value="IspD"/>
    <property type="match status" value="1"/>
</dbReference>
<dbReference type="SUPFAM" id="SSF53448">
    <property type="entry name" value="Nucleotide-diphospho-sugar transferases"/>
    <property type="match status" value="1"/>
</dbReference>
<dbReference type="PROSITE" id="PS01295">
    <property type="entry name" value="ISPD"/>
    <property type="match status" value="1"/>
</dbReference>
<organism>
    <name type="scientific">Pseudomonas entomophila (strain L48)</name>
    <dbReference type="NCBI Taxonomy" id="384676"/>
    <lineage>
        <taxon>Bacteria</taxon>
        <taxon>Pseudomonadati</taxon>
        <taxon>Pseudomonadota</taxon>
        <taxon>Gammaproteobacteria</taxon>
        <taxon>Pseudomonadales</taxon>
        <taxon>Pseudomonadaceae</taxon>
        <taxon>Pseudomonas</taxon>
    </lineage>
</organism>
<evidence type="ECO:0000255" key="1">
    <source>
        <dbReference type="HAMAP-Rule" id="MF_00108"/>
    </source>
</evidence>
<protein>
    <recommendedName>
        <fullName evidence="1">2-C-methyl-D-erythritol 4-phosphate cytidylyltransferase</fullName>
        <ecNumber evidence="1">2.7.7.60</ecNumber>
    </recommendedName>
    <alternativeName>
        <fullName evidence="1">4-diphosphocytidyl-2C-methyl-D-erythritol synthase</fullName>
    </alternativeName>
    <alternativeName>
        <fullName evidence="1">MEP cytidylyltransferase</fullName>
        <shortName evidence="1">MCT</shortName>
    </alternativeName>
</protein>
<keyword id="KW-0414">Isoprene biosynthesis</keyword>
<keyword id="KW-0548">Nucleotidyltransferase</keyword>
<keyword id="KW-0808">Transferase</keyword>
<feature type="chain" id="PRO_1000022940" description="2-C-methyl-D-erythritol 4-phosphate cytidylyltransferase">
    <location>
        <begin position="1"/>
        <end position="235"/>
    </location>
</feature>
<feature type="site" description="Transition state stabilizer" evidence="1">
    <location>
        <position position="20"/>
    </location>
</feature>
<feature type="site" description="Transition state stabilizer" evidence="1">
    <location>
        <position position="27"/>
    </location>
</feature>
<feature type="site" description="Positions MEP for the nucleophilic attack" evidence="1">
    <location>
        <position position="161"/>
    </location>
</feature>
<feature type="site" description="Positions MEP for the nucleophilic attack" evidence="1">
    <location>
        <position position="217"/>
    </location>
</feature>
<gene>
    <name evidence="1" type="primary">ispD</name>
    <name type="ordered locus">PSEEN4198</name>
</gene>
<sequence>MTTVLPAFWAVIPAAGIGARMAADRPKQYLQLGGQTILEHSLDCFLDHSALKGVVVSIAEDDPYWPGLRCASDLRIQRAPGGRERADSVLNALLLLHAQGASDDDWVLVHDAARPNLARSDLDKLLSELADDPVGGLLAVPARDTLKRAGADGRVAATVDRSTVWQAYTPQMFRLGMLHRALAECLVSDVAVTDESSAIEWAGHAPRLVEGRSDNIKVTRPEDLEWLRQRWSGRR</sequence>
<name>ISPD_PSEE4</name>